<organism>
    <name type="scientific">Phytoplasma australiense</name>
    <dbReference type="NCBI Taxonomy" id="59748"/>
    <lineage>
        <taxon>Bacteria</taxon>
        <taxon>Bacillati</taxon>
        <taxon>Mycoplasmatota</taxon>
        <taxon>Mollicutes</taxon>
        <taxon>Acholeplasmatales</taxon>
        <taxon>Acholeplasmataceae</taxon>
        <taxon>Candidatus Phytoplasma</taxon>
        <taxon>16SrXII (Stolbur group)</taxon>
    </lineage>
</organism>
<feature type="chain" id="PRO_1000136105" description="Glycerol-3-phosphate acyltransferase">
    <location>
        <begin position="1"/>
        <end position="225"/>
    </location>
</feature>
<feature type="transmembrane region" description="Helical" evidence="1">
    <location>
        <begin position="6"/>
        <end position="26"/>
    </location>
</feature>
<feature type="transmembrane region" description="Helical" evidence="1">
    <location>
        <begin position="55"/>
        <end position="75"/>
    </location>
</feature>
<feature type="transmembrane region" description="Helical" evidence="1">
    <location>
        <begin position="95"/>
        <end position="115"/>
    </location>
</feature>
<feature type="transmembrane region" description="Helical" evidence="1">
    <location>
        <begin position="135"/>
        <end position="155"/>
    </location>
</feature>
<feature type="transmembrane region" description="Helical" evidence="1">
    <location>
        <begin position="160"/>
        <end position="180"/>
    </location>
</feature>
<feature type="transmembrane region" description="Helical" evidence="1">
    <location>
        <begin position="187"/>
        <end position="207"/>
    </location>
</feature>
<comment type="function">
    <text evidence="1">Catalyzes the transfer of an acyl group from acyl-phosphate (acyl-PO(4)) to glycerol-3-phosphate (G3P) to form lysophosphatidic acid (LPA). This enzyme utilizes acyl-phosphate as fatty acyl donor, but not acyl-CoA or acyl-ACP.</text>
</comment>
<comment type="catalytic activity">
    <reaction evidence="1">
        <text>an acyl phosphate + sn-glycerol 3-phosphate = a 1-acyl-sn-glycero-3-phosphate + phosphate</text>
        <dbReference type="Rhea" id="RHEA:34075"/>
        <dbReference type="ChEBI" id="CHEBI:43474"/>
        <dbReference type="ChEBI" id="CHEBI:57597"/>
        <dbReference type="ChEBI" id="CHEBI:57970"/>
        <dbReference type="ChEBI" id="CHEBI:59918"/>
        <dbReference type="EC" id="2.3.1.275"/>
    </reaction>
</comment>
<comment type="pathway">
    <text evidence="1">Lipid metabolism; phospholipid metabolism.</text>
</comment>
<comment type="subunit">
    <text evidence="1">Probably interacts with PlsX.</text>
</comment>
<comment type="subcellular location">
    <subcellularLocation>
        <location evidence="1">Cell membrane</location>
        <topology evidence="1">Multi-pass membrane protein</topology>
    </subcellularLocation>
</comment>
<comment type="similarity">
    <text evidence="1">Belongs to the PlsY family.</text>
</comment>
<evidence type="ECO:0000255" key="1">
    <source>
        <dbReference type="HAMAP-Rule" id="MF_01043"/>
    </source>
</evidence>
<dbReference type="EC" id="2.3.1.275" evidence="1"/>
<dbReference type="EMBL" id="AM422018">
    <property type="protein sequence ID" value="CAM11601.1"/>
    <property type="molecule type" value="Genomic_DNA"/>
</dbReference>
<dbReference type="SMR" id="B1V9H9"/>
<dbReference type="STRING" id="59748.PA0266"/>
<dbReference type="KEGG" id="pal:PA0266"/>
<dbReference type="eggNOG" id="COG0344">
    <property type="taxonomic scope" value="Bacteria"/>
</dbReference>
<dbReference type="UniPathway" id="UPA00085"/>
<dbReference type="Proteomes" id="UP000008323">
    <property type="component" value="Chromosome"/>
</dbReference>
<dbReference type="GO" id="GO:0005886">
    <property type="term" value="C:plasma membrane"/>
    <property type="evidence" value="ECO:0007669"/>
    <property type="project" value="UniProtKB-SubCell"/>
</dbReference>
<dbReference type="GO" id="GO:0043772">
    <property type="term" value="F:acyl-phosphate glycerol-3-phosphate acyltransferase activity"/>
    <property type="evidence" value="ECO:0007669"/>
    <property type="project" value="UniProtKB-UniRule"/>
</dbReference>
<dbReference type="GO" id="GO:0008654">
    <property type="term" value="P:phospholipid biosynthetic process"/>
    <property type="evidence" value="ECO:0007669"/>
    <property type="project" value="UniProtKB-UniRule"/>
</dbReference>
<dbReference type="HAMAP" id="MF_01043">
    <property type="entry name" value="PlsY"/>
    <property type="match status" value="1"/>
</dbReference>
<dbReference type="InterPro" id="IPR003811">
    <property type="entry name" value="G3P_acylTferase_PlsY"/>
</dbReference>
<dbReference type="NCBIfam" id="TIGR00023">
    <property type="entry name" value="glycerol-3-phosphate 1-O-acyltransferase PlsY"/>
    <property type="match status" value="1"/>
</dbReference>
<dbReference type="PANTHER" id="PTHR30309:SF0">
    <property type="entry name" value="GLYCEROL-3-PHOSPHATE ACYLTRANSFERASE-RELATED"/>
    <property type="match status" value="1"/>
</dbReference>
<dbReference type="PANTHER" id="PTHR30309">
    <property type="entry name" value="INNER MEMBRANE PROTEIN YGIH"/>
    <property type="match status" value="1"/>
</dbReference>
<dbReference type="Pfam" id="PF02660">
    <property type="entry name" value="G3P_acyltransf"/>
    <property type="match status" value="1"/>
</dbReference>
<dbReference type="SMART" id="SM01207">
    <property type="entry name" value="G3P_acyltransf"/>
    <property type="match status" value="1"/>
</dbReference>
<reference key="1">
    <citation type="journal article" date="2008" name="J. Bacteriol.">
        <title>Comparative genome analysis of 'Candidatus Phytoplasma australiense' (subgroup tuf-Australia I; rp-A) and 'Ca. Phytoplasma asteris' strains OY-M and AY-WB.</title>
        <authorList>
            <person name="Tran-Nguyen L.T."/>
            <person name="Kube M."/>
            <person name="Schneider B."/>
            <person name="Reinhardt R."/>
            <person name="Gibb K.S."/>
        </authorList>
    </citation>
    <scope>NUCLEOTIDE SEQUENCE [LARGE SCALE GENOMIC DNA]</scope>
</reference>
<protein>
    <recommendedName>
        <fullName evidence="1">Glycerol-3-phosphate acyltransferase</fullName>
    </recommendedName>
    <alternativeName>
        <fullName evidence="1">Acyl-PO4 G3P acyltransferase</fullName>
    </alternativeName>
    <alternativeName>
        <fullName evidence="1">Acyl-phosphate--glycerol-3-phosphate acyltransferase</fullName>
    </alternativeName>
    <alternativeName>
        <fullName evidence="1">G3P acyltransferase</fullName>
        <shortName evidence="1">GPAT</shortName>
        <ecNumber evidence="1">2.3.1.275</ecNumber>
    </alternativeName>
    <alternativeName>
        <fullName evidence="1">Lysophosphatidic acid synthase</fullName>
        <shortName evidence="1">LPA synthase</shortName>
    </alternativeName>
</protein>
<sequence length="225" mass="25505">MVSIYFFFFFLLFYALGSFPTGLIIGKLTQKKDLRLVGSRNVGATNASRILGFKWGIVVFLFDFAKGLVPAIICLRFKNFKDLIFINGCDNRYKDIAICLLVILPIFGHMFSIFNKFKGGKAIATSVGVITAINPFIGLLGILFFVLLFIFVGYASLASIMATLLVDLLLFFINHHPGITNISQNQILYFFIGLSTCFIILKHHSNIIRLWQGKEYKFSFIKKRK</sequence>
<gene>
    <name evidence="1" type="primary">plsY</name>
    <name type="ordered locus">PA0266</name>
</gene>
<accession>B1V9H9</accession>
<proteinExistence type="inferred from homology"/>
<name>PLSY_PHYAS</name>
<keyword id="KW-1003">Cell membrane</keyword>
<keyword id="KW-0444">Lipid biosynthesis</keyword>
<keyword id="KW-0443">Lipid metabolism</keyword>
<keyword id="KW-0472">Membrane</keyword>
<keyword id="KW-0594">Phospholipid biosynthesis</keyword>
<keyword id="KW-1208">Phospholipid metabolism</keyword>
<keyword id="KW-1185">Reference proteome</keyword>
<keyword id="KW-0808">Transferase</keyword>
<keyword id="KW-0812">Transmembrane</keyword>
<keyword id="KW-1133">Transmembrane helix</keyword>